<geneLocation type="plastid"/>
<name>PSAC_CUSEX</name>
<protein>
    <recommendedName>
        <fullName evidence="2">Photosystem I iron-sulfur center</fullName>
        <ecNumber evidence="2">1.97.1.12</ecNumber>
    </recommendedName>
    <alternativeName>
        <fullName evidence="2">9 kDa polypeptide</fullName>
    </alternativeName>
    <alternativeName>
        <fullName evidence="2">PSI-C</fullName>
    </alternativeName>
    <alternativeName>
        <fullName evidence="2">Photosystem I subunit VII</fullName>
    </alternativeName>
    <alternativeName>
        <fullName evidence="2">PsaC</fullName>
    </alternativeName>
</protein>
<dbReference type="EC" id="1.97.1.12" evidence="2"/>
<dbReference type="EMBL" id="EU189132">
    <property type="protein sequence ID" value="ABW83738.1"/>
    <property type="molecule type" value="Genomic_DNA"/>
</dbReference>
<dbReference type="RefSeq" id="YP_001542574.1">
    <property type="nucleotide sequence ID" value="NC_009963.1"/>
</dbReference>
<dbReference type="SMR" id="A8W3G7"/>
<dbReference type="GeneID" id="5729570"/>
<dbReference type="GO" id="GO:0009534">
    <property type="term" value="C:chloroplast thylakoid"/>
    <property type="evidence" value="ECO:0007669"/>
    <property type="project" value="TreeGrafter"/>
</dbReference>
<dbReference type="GO" id="GO:0009522">
    <property type="term" value="C:photosystem I"/>
    <property type="evidence" value="ECO:0007669"/>
    <property type="project" value="UniProtKB-KW"/>
</dbReference>
<dbReference type="GO" id="GO:0055035">
    <property type="term" value="C:plastid thylakoid membrane"/>
    <property type="evidence" value="ECO:0007669"/>
    <property type="project" value="UniProtKB-SubCell"/>
</dbReference>
<dbReference type="GO" id="GO:0051539">
    <property type="term" value="F:4 iron, 4 sulfur cluster binding"/>
    <property type="evidence" value="ECO:0007669"/>
    <property type="project" value="UniProtKB-KW"/>
</dbReference>
<dbReference type="GO" id="GO:0009055">
    <property type="term" value="F:electron transfer activity"/>
    <property type="evidence" value="ECO:0007669"/>
    <property type="project" value="UniProtKB-UniRule"/>
</dbReference>
<dbReference type="GO" id="GO:0046872">
    <property type="term" value="F:metal ion binding"/>
    <property type="evidence" value="ECO:0007669"/>
    <property type="project" value="UniProtKB-KW"/>
</dbReference>
<dbReference type="GO" id="GO:0016491">
    <property type="term" value="F:oxidoreductase activity"/>
    <property type="evidence" value="ECO:0007669"/>
    <property type="project" value="UniProtKB-KW"/>
</dbReference>
<dbReference type="GO" id="GO:0009773">
    <property type="term" value="P:photosynthetic electron transport in photosystem I"/>
    <property type="evidence" value="ECO:0007669"/>
    <property type="project" value="InterPro"/>
</dbReference>
<dbReference type="FunFam" id="3.30.70.20:FF:000001">
    <property type="entry name" value="Photosystem I iron-sulfur center"/>
    <property type="match status" value="1"/>
</dbReference>
<dbReference type="Gene3D" id="3.30.70.20">
    <property type="match status" value="1"/>
</dbReference>
<dbReference type="HAMAP" id="MF_01303">
    <property type="entry name" value="PSI_PsaC"/>
    <property type="match status" value="1"/>
</dbReference>
<dbReference type="InterPro" id="IPR017896">
    <property type="entry name" value="4Fe4S_Fe-S-bd"/>
</dbReference>
<dbReference type="InterPro" id="IPR017900">
    <property type="entry name" value="4Fe4S_Fe_S_CS"/>
</dbReference>
<dbReference type="InterPro" id="IPR050157">
    <property type="entry name" value="PSI_iron-sulfur_center"/>
</dbReference>
<dbReference type="InterPro" id="IPR017491">
    <property type="entry name" value="PSI_PsaC"/>
</dbReference>
<dbReference type="NCBIfam" id="TIGR03048">
    <property type="entry name" value="PS_I_psaC"/>
    <property type="match status" value="1"/>
</dbReference>
<dbReference type="PANTHER" id="PTHR24960:SF79">
    <property type="entry name" value="PHOTOSYSTEM I IRON-SULFUR CENTER"/>
    <property type="match status" value="1"/>
</dbReference>
<dbReference type="PANTHER" id="PTHR24960">
    <property type="entry name" value="PHOTOSYSTEM I IRON-SULFUR CENTER-RELATED"/>
    <property type="match status" value="1"/>
</dbReference>
<dbReference type="Pfam" id="PF14697">
    <property type="entry name" value="Fer4_21"/>
    <property type="match status" value="1"/>
</dbReference>
<dbReference type="SUPFAM" id="SSF54862">
    <property type="entry name" value="4Fe-4S ferredoxins"/>
    <property type="match status" value="1"/>
</dbReference>
<dbReference type="PROSITE" id="PS00198">
    <property type="entry name" value="4FE4S_FER_1"/>
    <property type="match status" value="2"/>
</dbReference>
<dbReference type="PROSITE" id="PS51379">
    <property type="entry name" value="4FE4S_FER_2"/>
    <property type="match status" value="2"/>
</dbReference>
<accession>A8W3G7</accession>
<sequence length="81" mass="9088">MSHFVKIYDTCIGCTQCVRACPTDVLEMIPWDRCKAKQIASAPRTEDCVGCKRCESACPTDFLSVRVYLGRETTRSMGLAY</sequence>
<organism>
    <name type="scientific">Cuscuta exaltata</name>
    <name type="common">Tall dodder</name>
    <dbReference type="NCBI Taxonomy" id="476139"/>
    <lineage>
        <taxon>Eukaryota</taxon>
        <taxon>Viridiplantae</taxon>
        <taxon>Streptophyta</taxon>
        <taxon>Embryophyta</taxon>
        <taxon>Tracheophyta</taxon>
        <taxon>Spermatophyta</taxon>
        <taxon>Magnoliopsida</taxon>
        <taxon>eudicotyledons</taxon>
        <taxon>Gunneridae</taxon>
        <taxon>Pentapetalae</taxon>
        <taxon>asterids</taxon>
        <taxon>lamiids</taxon>
        <taxon>Solanales</taxon>
        <taxon>Convolvulaceae</taxon>
        <taxon>Cuscuteae</taxon>
        <taxon>Cuscuta</taxon>
        <taxon>Cuscuta subgen. Monogynella</taxon>
    </lineage>
</organism>
<keyword id="KW-0004">4Fe-4S</keyword>
<keyword id="KW-0249">Electron transport</keyword>
<keyword id="KW-0408">Iron</keyword>
<keyword id="KW-0411">Iron-sulfur</keyword>
<keyword id="KW-0472">Membrane</keyword>
<keyword id="KW-0479">Metal-binding</keyword>
<keyword id="KW-0560">Oxidoreductase</keyword>
<keyword id="KW-0602">Photosynthesis</keyword>
<keyword id="KW-0603">Photosystem I</keyword>
<keyword id="KW-0934">Plastid</keyword>
<keyword id="KW-0677">Repeat</keyword>
<keyword id="KW-0793">Thylakoid</keyword>
<keyword id="KW-0813">Transport</keyword>
<comment type="function">
    <text evidence="2">Apoprotein for the two 4Fe-4S centers FA and FB of photosystem I (PSI); essential for photochemical activity. FB is the terminal electron acceptor of PSI, donating electrons to ferredoxin. The C-terminus interacts with PsaA/B/D and helps assemble the protein into the PSI complex. Required for binding of PsaD and PsaE to PSI. PSI is a plastocyanin-ferredoxin oxidoreductase, converting photonic excitation into a charge separation, which transfers an electron from the donor P700 chlorophyll pair to the spectroscopically characterized acceptors A0, A1, FX, FA and FB in turn.</text>
</comment>
<comment type="catalytic activity">
    <reaction evidence="2">
        <text>reduced [plastocyanin] + hnu + oxidized [2Fe-2S]-[ferredoxin] = oxidized [plastocyanin] + reduced [2Fe-2S]-[ferredoxin]</text>
        <dbReference type="Rhea" id="RHEA:30407"/>
        <dbReference type="Rhea" id="RHEA-COMP:10000"/>
        <dbReference type="Rhea" id="RHEA-COMP:10001"/>
        <dbReference type="Rhea" id="RHEA-COMP:10039"/>
        <dbReference type="Rhea" id="RHEA-COMP:10040"/>
        <dbReference type="ChEBI" id="CHEBI:29036"/>
        <dbReference type="ChEBI" id="CHEBI:30212"/>
        <dbReference type="ChEBI" id="CHEBI:33737"/>
        <dbReference type="ChEBI" id="CHEBI:33738"/>
        <dbReference type="ChEBI" id="CHEBI:49552"/>
        <dbReference type="EC" id="1.97.1.12"/>
    </reaction>
</comment>
<comment type="cofactor">
    <cofactor evidence="2">
        <name>[4Fe-4S] cluster</name>
        <dbReference type="ChEBI" id="CHEBI:49883"/>
    </cofactor>
    <text evidence="2">Binds 2 [4Fe-4S] clusters. Cluster 2 is most probably the spectroscopically characterized electron acceptor FA and cluster 1 is most probably FB.</text>
</comment>
<comment type="subunit">
    <text evidence="2">The eukaryotic PSI reaction center is composed of at least 11 subunits.</text>
</comment>
<comment type="subcellular location">
    <subcellularLocation>
        <location evidence="1">Plastid thylakoid membrane</location>
        <topology evidence="2">Peripheral membrane protein</topology>
        <orientation evidence="2">Stromal side</orientation>
    </subcellularLocation>
</comment>
<comment type="caution">
    <text evidence="3">Young tissue from this organism is photosynthetic and contains some thylakoids, although the photosynthetic activity does not exceed the light compensation point.</text>
</comment>
<proteinExistence type="inferred from homology"/>
<gene>
    <name evidence="2" type="primary">psaC</name>
</gene>
<reference key="1">
    <citation type="journal article" date="2007" name="BMC Plant Biol.">
        <title>Complete plastid genome sequences suggest strong selection for retention of photosynthetic genes in the parasitic plant genus Cuscuta.</title>
        <authorList>
            <person name="McNeal J.R."/>
            <person name="Kuehl J.V."/>
            <person name="Boore J.L."/>
            <person name="dePamphilis C.W."/>
        </authorList>
    </citation>
    <scope>NUCLEOTIDE SEQUENCE [LARGE SCALE GENOMIC DNA]</scope>
</reference>
<evidence type="ECO:0000250" key="1"/>
<evidence type="ECO:0000255" key="2">
    <source>
        <dbReference type="HAMAP-Rule" id="MF_01303"/>
    </source>
</evidence>
<evidence type="ECO:0000305" key="3"/>
<feature type="chain" id="PRO_0000322035" description="Photosystem I iron-sulfur center">
    <location>
        <begin position="1"/>
        <end position="81"/>
    </location>
</feature>
<feature type="domain" description="4Fe-4S ferredoxin-type 1" evidence="2">
    <location>
        <begin position="2"/>
        <end position="31"/>
    </location>
</feature>
<feature type="domain" description="4Fe-4S ferredoxin-type 2" evidence="2">
    <location>
        <begin position="39"/>
        <end position="68"/>
    </location>
</feature>
<feature type="binding site" evidence="2">
    <location>
        <position position="11"/>
    </location>
    <ligand>
        <name>[4Fe-4S] cluster</name>
        <dbReference type="ChEBI" id="CHEBI:49883"/>
        <label>1</label>
    </ligand>
</feature>
<feature type="binding site" evidence="2">
    <location>
        <position position="14"/>
    </location>
    <ligand>
        <name>[4Fe-4S] cluster</name>
        <dbReference type="ChEBI" id="CHEBI:49883"/>
        <label>1</label>
    </ligand>
</feature>
<feature type="binding site" evidence="2">
    <location>
        <position position="17"/>
    </location>
    <ligand>
        <name>[4Fe-4S] cluster</name>
        <dbReference type="ChEBI" id="CHEBI:49883"/>
        <label>1</label>
    </ligand>
</feature>
<feature type="binding site" evidence="2">
    <location>
        <position position="21"/>
    </location>
    <ligand>
        <name>[4Fe-4S] cluster</name>
        <dbReference type="ChEBI" id="CHEBI:49883"/>
        <label>2</label>
    </ligand>
</feature>
<feature type="binding site" evidence="2">
    <location>
        <position position="48"/>
    </location>
    <ligand>
        <name>[4Fe-4S] cluster</name>
        <dbReference type="ChEBI" id="CHEBI:49883"/>
        <label>2</label>
    </ligand>
</feature>
<feature type="binding site" evidence="2">
    <location>
        <position position="51"/>
    </location>
    <ligand>
        <name>[4Fe-4S] cluster</name>
        <dbReference type="ChEBI" id="CHEBI:49883"/>
        <label>2</label>
    </ligand>
</feature>
<feature type="binding site" evidence="2">
    <location>
        <position position="54"/>
    </location>
    <ligand>
        <name>[4Fe-4S] cluster</name>
        <dbReference type="ChEBI" id="CHEBI:49883"/>
        <label>2</label>
    </ligand>
</feature>
<feature type="binding site" evidence="2">
    <location>
        <position position="58"/>
    </location>
    <ligand>
        <name>[4Fe-4S] cluster</name>
        <dbReference type="ChEBI" id="CHEBI:49883"/>
        <label>1</label>
    </ligand>
</feature>